<protein>
    <recommendedName>
        <fullName>S-ribosylhomocysteine lyase</fullName>
        <ecNumber>4.4.1.21</ecNumber>
    </recommendedName>
    <alternativeName>
        <fullName>AI-2 synthesis protein</fullName>
    </alternativeName>
    <alternativeName>
        <fullName>Autoinducer-2 production protein LuxS</fullName>
    </alternativeName>
</protein>
<evidence type="ECO:0000250" key="1"/>
<evidence type="ECO:0000269" key="2">
    <source>
    </source>
</evidence>
<evidence type="ECO:0000269" key="3">
    <source>
    </source>
</evidence>
<evidence type="ECO:0000305" key="4"/>
<proteinExistence type="evidence at protein level"/>
<sequence>MTQMNVESFNLDHTKVKAPYIRLVGVTEGDKGDKIYKYDIRVKQPNQEHMDMPALHSLEHLMAENSRNHHDRIIDIGPMGCQTGFYLAVLNDDSYENILQVVENTLKDVLNATEVPACNEVQCGFAASHSLEGAQELARELLNKRNEWTEVF</sequence>
<gene>
    <name type="primary">luxS</name>
    <name type="ordered locus">HBHAL_2021</name>
</gene>
<organism>
    <name type="scientific">Halobacillus halophilus (strain ATCC 35676 / DSM 2266 / JCM 20832 / KCTC 3685 / LMG 17431 / NBRC 102448 / NCIMB 2269)</name>
    <name type="common">Sporosarcina halophila</name>
    <dbReference type="NCBI Taxonomy" id="866895"/>
    <lineage>
        <taxon>Bacteria</taxon>
        <taxon>Bacillati</taxon>
        <taxon>Bacillota</taxon>
        <taxon>Bacilli</taxon>
        <taxon>Bacillales</taxon>
        <taxon>Bacillaceae</taxon>
        <taxon>Halobacillus</taxon>
    </lineage>
</organism>
<dbReference type="EC" id="4.4.1.21"/>
<dbReference type="EMBL" id="EF088802">
    <property type="protein sequence ID" value="ABL09514.1"/>
    <property type="molecule type" value="Genomic_DNA"/>
</dbReference>
<dbReference type="EMBL" id="HE717023">
    <property type="protein sequence ID" value="CCG44382.1"/>
    <property type="molecule type" value="Genomic_DNA"/>
</dbReference>
<dbReference type="RefSeq" id="WP_014642285.1">
    <property type="nucleotide sequence ID" value="NC_017668.1"/>
</dbReference>
<dbReference type="SMR" id="I0JJR3"/>
<dbReference type="STRING" id="866895.HBHAL_2021"/>
<dbReference type="KEGG" id="hhd:HBHAL_2021"/>
<dbReference type="PATRIC" id="fig|866895.3.peg.1028"/>
<dbReference type="eggNOG" id="COG1854">
    <property type="taxonomic scope" value="Bacteria"/>
</dbReference>
<dbReference type="HOGENOM" id="CLU_107531_2_0_9"/>
<dbReference type="Proteomes" id="UP000007397">
    <property type="component" value="Chromosome"/>
</dbReference>
<dbReference type="GO" id="GO:0005506">
    <property type="term" value="F:iron ion binding"/>
    <property type="evidence" value="ECO:0007669"/>
    <property type="project" value="InterPro"/>
</dbReference>
<dbReference type="GO" id="GO:0043768">
    <property type="term" value="F:S-ribosylhomocysteine lyase activity"/>
    <property type="evidence" value="ECO:0007669"/>
    <property type="project" value="UniProtKB-UniRule"/>
</dbReference>
<dbReference type="GO" id="GO:0009372">
    <property type="term" value="P:quorum sensing"/>
    <property type="evidence" value="ECO:0007669"/>
    <property type="project" value="UniProtKB-UniRule"/>
</dbReference>
<dbReference type="Gene3D" id="3.30.1360.80">
    <property type="entry name" value="S-ribosylhomocysteinase (LuxS)"/>
    <property type="match status" value="1"/>
</dbReference>
<dbReference type="HAMAP" id="MF_00091">
    <property type="entry name" value="LuxS"/>
    <property type="match status" value="1"/>
</dbReference>
<dbReference type="InterPro" id="IPR037005">
    <property type="entry name" value="LuxS_sf"/>
</dbReference>
<dbReference type="InterPro" id="IPR011249">
    <property type="entry name" value="Metalloenz_LuxS/M16"/>
</dbReference>
<dbReference type="InterPro" id="IPR003815">
    <property type="entry name" value="S-ribosylhomocysteinase"/>
</dbReference>
<dbReference type="NCBIfam" id="NF002604">
    <property type="entry name" value="PRK02260.1-4"/>
    <property type="match status" value="1"/>
</dbReference>
<dbReference type="PANTHER" id="PTHR35799">
    <property type="entry name" value="S-RIBOSYLHOMOCYSTEINE LYASE"/>
    <property type="match status" value="1"/>
</dbReference>
<dbReference type="PANTHER" id="PTHR35799:SF1">
    <property type="entry name" value="S-RIBOSYLHOMOCYSTEINE LYASE"/>
    <property type="match status" value="1"/>
</dbReference>
<dbReference type="Pfam" id="PF02664">
    <property type="entry name" value="LuxS"/>
    <property type="match status" value="1"/>
</dbReference>
<dbReference type="PIRSF" id="PIRSF006160">
    <property type="entry name" value="AI2"/>
    <property type="match status" value="1"/>
</dbReference>
<dbReference type="PRINTS" id="PR01487">
    <property type="entry name" value="LUXSPROTEIN"/>
</dbReference>
<dbReference type="SUPFAM" id="SSF63411">
    <property type="entry name" value="LuxS/MPP-like metallohydrolase"/>
    <property type="match status" value="1"/>
</dbReference>
<keyword id="KW-0071">Autoinducer synthesis</keyword>
<keyword id="KW-0903">Direct protein sequencing</keyword>
<keyword id="KW-0408">Iron</keyword>
<keyword id="KW-0456">Lyase</keyword>
<keyword id="KW-0479">Metal-binding</keyword>
<keyword id="KW-0673">Quorum sensing</keyword>
<keyword id="KW-1185">Reference proteome</keyword>
<comment type="function">
    <text evidence="1">Involved in the synthesis of autoinducer 2 (AI-2) which is secreted by bacteria and is used to communicate both the cell density and the metabolic potential of the environment. The regulation of gene expression in response to changes in cell density is called quorum sensing. Catalyzes the transformation of S-ribosylhomocysteine (RHC) to homocysteine (HC) and 4,5-dihydroxy-2,3-pentadione (DPD) (By similarity).</text>
</comment>
<comment type="catalytic activity">
    <reaction>
        <text>S-(5-deoxy-D-ribos-5-yl)-L-homocysteine = (S)-4,5-dihydroxypentane-2,3-dione + L-homocysteine</text>
        <dbReference type="Rhea" id="RHEA:17753"/>
        <dbReference type="ChEBI" id="CHEBI:29484"/>
        <dbReference type="ChEBI" id="CHEBI:58195"/>
        <dbReference type="ChEBI" id="CHEBI:58199"/>
        <dbReference type="EC" id="4.4.1.21"/>
    </reaction>
</comment>
<comment type="cofactor">
    <cofactor evidence="1">
        <name>Fe cation</name>
        <dbReference type="ChEBI" id="CHEBI:24875"/>
    </cofactor>
    <text evidence="1">Binds 1 Fe cation per subunit.</text>
</comment>
<comment type="subunit">
    <text evidence="1">Homodimer.</text>
</comment>
<comment type="induction">
    <text evidence="2 3">Expression is growth phase-dependent, with maximal expression in the mid-exponential growth phase. Induced by high salt concentrations (at protein level).</text>
</comment>
<comment type="similarity">
    <text evidence="4">Belongs to the LuxS family.</text>
</comment>
<feature type="chain" id="PRO_0000429001" description="S-ribosylhomocysteine lyase">
    <location>
        <begin position="1"/>
        <end position="152"/>
    </location>
</feature>
<feature type="binding site" evidence="1">
    <location>
        <position position="56"/>
    </location>
    <ligand>
        <name>Fe cation</name>
        <dbReference type="ChEBI" id="CHEBI:24875"/>
    </ligand>
</feature>
<feature type="binding site" evidence="1">
    <location>
        <position position="60"/>
    </location>
    <ligand>
        <name>Fe cation</name>
        <dbReference type="ChEBI" id="CHEBI:24875"/>
    </ligand>
</feature>
<feature type="binding site" evidence="1">
    <location>
        <position position="123"/>
    </location>
    <ligand>
        <name>Fe cation</name>
        <dbReference type="ChEBI" id="CHEBI:24875"/>
    </ligand>
</feature>
<feature type="sequence conflict" description="In Ref. 3; AA sequence." evidence="4" ref="3">
    <location>
        <position position="2"/>
    </location>
</feature>
<feature type="sequence conflict" description="In Ref. 3; AA sequence." evidence="4" ref="3">
    <original>S</original>
    <variation>V</variation>
    <location>
        <position position="8"/>
    </location>
</feature>
<accession>I0JJR3</accession>
<accession>A1DZZ4</accession>
<name>LUXS_HALH3</name>
<reference key="1">
    <citation type="journal article" date="2007" name="Appl. Environ. Microbiol.">
        <title>Autoinducer-2-producing protein LuxS, a novel salt- and chloride-induced protein in the moderately halophilic bacterium Halobacillus halophilus.</title>
        <authorList>
            <person name="Sewald X."/>
            <person name="Saum S.H."/>
            <person name="Palm P."/>
            <person name="Pfeiffer F."/>
            <person name="Oesterhelt D."/>
            <person name="Mueller V."/>
        </authorList>
    </citation>
    <scope>NUCLEOTIDE SEQUENCE [GENOMIC DNA]</scope>
    <scope>INDUCTION</scope>
    <source>
        <strain>ATCC 35676 / DSM 2266 / JCM 20832 / KCTC 3685 / LMG 17431 / NBRC 102448 / NCIMB 2269</strain>
    </source>
</reference>
<reference key="2">
    <citation type="journal article" date="2013" name="Environ. Microbiol.">
        <title>Chloride and organic osmolytes: a hybrid strategy to cope with elevated salinities by the moderately halophilic, chloride-dependent bacterium Halobacillus halophilus.</title>
        <authorList>
            <person name="Saum S.H."/>
            <person name="Pfeiffer F."/>
            <person name="Palm P."/>
            <person name="Rampp M."/>
            <person name="Schuster S.C."/>
            <person name="Muller V."/>
            <person name="Oesterhelt D."/>
        </authorList>
    </citation>
    <scope>NUCLEOTIDE SEQUENCE [LARGE SCALE GENOMIC DNA]</scope>
    <source>
        <strain>ATCC 35676 / DSM 2266 / JCM 20832 / KCTC 3685 / LMG 17431 / NBRC 102448 / NCIMB 2269</strain>
    </source>
</reference>
<reference key="3">
    <citation type="journal article" date="2002" name="J. Bacteriol.">
        <title>Chloride, a new environmental signal molecule involved in gene regulation in a moderately halophilic bacterium, Halobacillus halophilus.</title>
        <authorList>
            <person name="Roessler M."/>
            <person name="Muller V."/>
        </authorList>
    </citation>
    <scope>PROTEIN SEQUENCE OF 1-19</scope>
    <scope>INDUCTION</scope>
    <source>
        <strain>ATCC 35676 / DSM 2266 / JCM 20832 / KCTC 3685 / LMG 17431 / NBRC 102448 / NCIMB 2269</strain>
    </source>
</reference>